<keyword id="KW-0067">ATP-binding</keyword>
<keyword id="KW-0315">Glutamine amidotransferase</keyword>
<keyword id="KW-0332">GMP biosynthesis</keyword>
<keyword id="KW-0436">Ligase</keyword>
<keyword id="KW-0547">Nucleotide-binding</keyword>
<keyword id="KW-0658">Purine biosynthesis</keyword>
<sequence length="521" mass="57086">MSSLHNDKILILDFGAQYTQLIARRIREIGVYCEIWAWDHDPSEIAGFGAKGIILSGGPESTTLPGAPVAPQEVFDSGLPVFGICYGMQTLAAQLGGATEAADQREFGHAEVDVVAADALFSGLTDHAGASRLNVWMSHGDHVSQVPPGFTITAVTDRIPVAAMSNEDKRWYGVQFHPEVTHTLQGQTLLRRFVVDVCGCQTLWTAANIIDDQIARVREQVGDDEVILGLSGGVDSSVVAALLHKAIGDKLTCVFVDTGLLRWQEGDQVMAMFAEHMGVKVIRVNAADRYFAKLEGVSDPEAKRKIIGNLFVDIFDEESNKLANAKWLAQGTIYPDVIESAGSKTGKAHVIKSHHNVGGLPEHMKLGLVEPLRELFKDEVRRLGVELGLPRTMVYRHPFPGPGLGVRILGEVKREYAELLAKADAIFIDELRKADLYDKTSQAFAVFLPVKSVGVVGDARAYEWVIALRAVETIDFMTAHWAHLPYDFLGTVSNRIINELRGVSRVVYDISGKPPATIEWE</sequence>
<reference key="1">
    <citation type="journal article" date="2008" name="J. Biotechnol.">
        <title>The genome of Xanthomonas campestris pv. campestris B100 and its use for the reconstruction of metabolic pathways involved in xanthan biosynthesis.</title>
        <authorList>
            <person name="Vorhoelter F.-J."/>
            <person name="Schneiker S."/>
            <person name="Goesmann A."/>
            <person name="Krause L."/>
            <person name="Bekel T."/>
            <person name="Kaiser O."/>
            <person name="Linke B."/>
            <person name="Patschkowski T."/>
            <person name="Rueckert C."/>
            <person name="Schmid J."/>
            <person name="Sidhu V.K."/>
            <person name="Sieber V."/>
            <person name="Tauch A."/>
            <person name="Watt S.A."/>
            <person name="Weisshaar B."/>
            <person name="Becker A."/>
            <person name="Niehaus K."/>
            <person name="Puehler A."/>
        </authorList>
    </citation>
    <scope>NUCLEOTIDE SEQUENCE [LARGE SCALE GENOMIC DNA]</scope>
    <source>
        <strain>B100</strain>
    </source>
</reference>
<organism>
    <name type="scientific">Xanthomonas campestris pv. campestris (strain B100)</name>
    <dbReference type="NCBI Taxonomy" id="509169"/>
    <lineage>
        <taxon>Bacteria</taxon>
        <taxon>Pseudomonadati</taxon>
        <taxon>Pseudomonadota</taxon>
        <taxon>Gammaproteobacteria</taxon>
        <taxon>Lysobacterales</taxon>
        <taxon>Lysobacteraceae</taxon>
        <taxon>Xanthomonas</taxon>
    </lineage>
</organism>
<proteinExistence type="inferred from homology"/>
<comment type="function">
    <text evidence="1">Catalyzes the synthesis of GMP from XMP.</text>
</comment>
<comment type="catalytic activity">
    <reaction evidence="1">
        <text>XMP + L-glutamine + ATP + H2O = GMP + L-glutamate + AMP + diphosphate + 2 H(+)</text>
        <dbReference type="Rhea" id="RHEA:11680"/>
        <dbReference type="ChEBI" id="CHEBI:15377"/>
        <dbReference type="ChEBI" id="CHEBI:15378"/>
        <dbReference type="ChEBI" id="CHEBI:29985"/>
        <dbReference type="ChEBI" id="CHEBI:30616"/>
        <dbReference type="ChEBI" id="CHEBI:33019"/>
        <dbReference type="ChEBI" id="CHEBI:57464"/>
        <dbReference type="ChEBI" id="CHEBI:58115"/>
        <dbReference type="ChEBI" id="CHEBI:58359"/>
        <dbReference type="ChEBI" id="CHEBI:456215"/>
        <dbReference type="EC" id="6.3.5.2"/>
    </reaction>
</comment>
<comment type="pathway">
    <text evidence="1">Purine metabolism; GMP biosynthesis; GMP from XMP (L-Gln route): step 1/1.</text>
</comment>
<comment type="subunit">
    <text evidence="1">Homodimer.</text>
</comment>
<feature type="chain" id="PRO_1000120452" description="GMP synthase [glutamine-hydrolyzing]">
    <location>
        <begin position="1"/>
        <end position="521"/>
    </location>
</feature>
<feature type="domain" description="Glutamine amidotransferase type-1" evidence="1">
    <location>
        <begin position="8"/>
        <end position="203"/>
    </location>
</feature>
<feature type="domain" description="GMPS ATP-PPase" evidence="1">
    <location>
        <begin position="204"/>
        <end position="396"/>
    </location>
</feature>
<feature type="active site" description="Nucleophile" evidence="1">
    <location>
        <position position="85"/>
    </location>
</feature>
<feature type="active site" evidence="1">
    <location>
        <position position="177"/>
    </location>
</feature>
<feature type="active site" evidence="1">
    <location>
        <position position="179"/>
    </location>
</feature>
<feature type="binding site" evidence="1">
    <location>
        <begin position="231"/>
        <end position="237"/>
    </location>
    <ligand>
        <name>ATP</name>
        <dbReference type="ChEBI" id="CHEBI:30616"/>
    </ligand>
</feature>
<accession>B0RSB6</accession>
<evidence type="ECO:0000255" key="1">
    <source>
        <dbReference type="HAMAP-Rule" id="MF_00344"/>
    </source>
</evidence>
<name>GUAA_XANCB</name>
<gene>
    <name evidence="1" type="primary">guaA</name>
    <name type="ordered locus">xcc-b100_1998</name>
</gene>
<dbReference type="EC" id="6.3.5.2" evidence="1"/>
<dbReference type="EMBL" id="AM920689">
    <property type="protein sequence ID" value="CAP51351.1"/>
    <property type="molecule type" value="Genomic_DNA"/>
</dbReference>
<dbReference type="SMR" id="B0RSB6"/>
<dbReference type="MEROPS" id="C26.957"/>
<dbReference type="KEGG" id="xca:xcc-b100_1998"/>
<dbReference type="HOGENOM" id="CLU_014340_0_5_6"/>
<dbReference type="UniPathway" id="UPA00189">
    <property type="reaction ID" value="UER00296"/>
</dbReference>
<dbReference type="Proteomes" id="UP000001188">
    <property type="component" value="Chromosome"/>
</dbReference>
<dbReference type="GO" id="GO:0005829">
    <property type="term" value="C:cytosol"/>
    <property type="evidence" value="ECO:0007669"/>
    <property type="project" value="TreeGrafter"/>
</dbReference>
<dbReference type="GO" id="GO:0005524">
    <property type="term" value="F:ATP binding"/>
    <property type="evidence" value="ECO:0007669"/>
    <property type="project" value="UniProtKB-UniRule"/>
</dbReference>
<dbReference type="GO" id="GO:0003921">
    <property type="term" value="F:GMP synthase activity"/>
    <property type="evidence" value="ECO:0007669"/>
    <property type="project" value="InterPro"/>
</dbReference>
<dbReference type="CDD" id="cd01742">
    <property type="entry name" value="GATase1_GMP_Synthase"/>
    <property type="match status" value="1"/>
</dbReference>
<dbReference type="CDD" id="cd01997">
    <property type="entry name" value="GMP_synthase_C"/>
    <property type="match status" value="1"/>
</dbReference>
<dbReference type="FunFam" id="3.30.300.10:FF:000002">
    <property type="entry name" value="GMP synthase [glutamine-hydrolyzing]"/>
    <property type="match status" value="1"/>
</dbReference>
<dbReference type="FunFam" id="3.40.50.620:FF:000001">
    <property type="entry name" value="GMP synthase [glutamine-hydrolyzing]"/>
    <property type="match status" value="1"/>
</dbReference>
<dbReference type="FunFam" id="3.40.50.880:FF:000001">
    <property type="entry name" value="GMP synthase [glutamine-hydrolyzing]"/>
    <property type="match status" value="1"/>
</dbReference>
<dbReference type="Gene3D" id="3.30.300.10">
    <property type="match status" value="1"/>
</dbReference>
<dbReference type="Gene3D" id="3.40.50.880">
    <property type="match status" value="1"/>
</dbReference>
<dbReference type="Gene3D" id="3.40.50.620">
    <property type="entry name" value="HUPs"/>
    <property type="match status" value="1"/>
</dbReference>
<dbReference type="HAMAP" id="MF_00344">
    <property type="entry name" value="GMP_synthase"/>
    <property type="match status" value="1"/>
</dbReference>
<dbReference type="InterPro" id="IPR029062">
    <property type="entry name" value="Class_I_gatase-like"/>
</dbReference>
<dbReference type="InterPro" id="IPR017926">
    <property type="entry name" value="GATASE"/>
</dbReference>
<dbReference type="InterPro" id="IPR001674">
    <property type="entry name" value="GMP_synth_C"/>
</dbReference>
<dbReference type="InterPro" id="IPR004739">
    <property type="entry name" value="GMP_synth_GATase"/>
</dbReference>
<dbReference type="InterPro" id="IPR022955">
    <property type="entry name" value="GMP_synthase"/>
</dbReference>
<dbReference type="InterPro" id="IPR025777">
    <property type="entry name" value="GMPS_ATP_PPase_dom"/>
</dbReference>
<dbReference type="InterPro" id="IPR022310">
    <property type="entry name" value="NAD/GMP_synthase"/>
</dbReference>
<dbReference type="InterPro" id="IPR014729">
    <property type="entry name" value="Rossmann-like_a/b/a_fold"/>
</dbReference>
<dbReference type="NCBIfam" id="TIGR00884">
    <property type="entry name" value="guaA_Cterm"/>
    <property type="match status" value="1"/>
</dbReference>
<dbReference type="NCBIfam" id="TIGR00888">
    <property type="entry name" value="guaA_Nterm"/>
    <property type="match status" value="1"/>
</dbReference>
<dbReference type="NCBIfam" id="NF000848">
    <property type="entry name" value="PRK00074.1"/>
    <property type="match status" value="1"/>
</dbReference>
<dbReference type="PANTHER" id="PTHR11922:SF2">
    <property type="entry name" value="GMP SYNTHASE [GLUTAMINE-HYDROLYZING]"/>
    <property type="match status" value="1"/>
</dbReference>
<dbReference type="PANTHER" id="PTHR11922">
    <property type="entry name" value="GMP SYNTHASE-RELATED"/>
    <property type="match status" value="1"/>
</dbReference>
<dbReference type="Pfam" id="PF00117">
    <property type="entry name" value="GATase"/>
    <property type="match status" value="1"/>
</dbReference>
<dbReference type="Pfam" id="PF00958">
    <property type="entry name" value="GMP_synt_C"/>
    <property type="match status" value="1"/>
</dbReference>
<dbReference type="Pfam" id="PF02540">
    <property type="entry name" value="NAD_synthase"/>
    <property type="match status" value="1"/>
</dbReference>
<dbReference type="PRINTS" id="PR00097">
    <property type="entry name" value="ANTSNTHASEII"/>
</dbReference>
<dbReference type="PRINTS" id="PR00099">
    <property type="entry name" value="CPSGATASE"/>
</dbReference>
<dbReference type="PRINTS" id="PR00096">
    <property type="entry name" value="GATASE"/>
</dbReference>
<dbReference type="SUPFAM" id="SSF52402">
    <property type="entry name" value="Adenine nucleotide alpha hydrolases-like"/>
    <property type="match status" value="1"/>
</dbReference>
<dbReference type="SUPFAM" id="SSF52317">
    <property type="entry name" value="Class I glutamine amidotransferase-like"/>
    <property type="match status" value="1"/>
</dbReference>
<dbReference type="SUPFAM" id="SSF54810">
    <property type="entry name" value="GMP synthetase C-terminal dimerisation domain"/>
    <property type="match status" value="1"/>
</dbReference>
<dbReference type="PROSITE" id="PS51273">
    <property type="entry name" value="GATASE_TYPE_1"/>
    <property type="match status" value="1"/>
</dbReference>
<dbReference type="PROSITE" id="PS51553">
    <property type="entry name" value="GMPS_ATP_PPASE"/>
    <property type="match status" value="1"/>
</dbReference>
<protein>
    <recommendedName>
        <fullName evidence="1">GMP synthase [glutamine-hydrolyzing]</fullName>
        <ecNumber evidence="1">6.3.5.2</ecNumber>
    </recommendedName>
    <alternativeName>
        <fullName evidence="1">GMP synthetase</fullName>
    </alternativeName>
    <alternativeName>
        <fullName evidence="1">Glutamine amidotransferase</fullName>
    </alternativeName>
</protein>